<organism>
    <name type="scientific">Pseudomonas fluorescens (strain ATCC BAA-477 / NRRL B-23932 / Pf-5)</name>
    <dbReference type="NCBI Taxonomy" id="220664"/>
    <lineage>
        <taxon>Bacteria</taxon>
        <taxon>Pseudomonadati</taxon>
        <taxon>Pseudomonadota</taxon>
        <taxon>Gammaproteobacteria</taxon>
        <taxon>Pseudomonadales</taxon>
        <taxon>Pseudomonadaceae</taxon>
        <taxon>Pseudomonas</taxon>
    </lineage>
</organism>
<name>ECOT_PSEF5</name>
<gene>
    <name evidence="1" type="primary">eco</name>
    <name type="ordered locus">PFL_3096</name>
</gene>
<reference key="1">
    <citation type="journal article" date="2005" name="Nat. Biotechnol.">
        <title>Complete genome sequence of the plant commensal Pseudomonas fluorescens Pf-5.</title>
        <authorList>
            <person name="Paulsen I.T."/>
            <person name="Press C.M."/>
            <person name="Ravel J."/>
            <person name="Kobayashi D.Y."/>
            <person name="Myers G.S.A."/>
            <person name="Mavrodi D.V."/>
            <person name="DeBoy R.T."/>
            <person name="Seshadri R."/>
            <person name="Ren Q."/>
            <person name="Madupu R."/>
            <person name="Dodson R.J."/>
            <person name="Durkin A.S."/>
            <person name="Brinkac L.M."/>
            <person name="Daugherty S.C."/>
            <person name="Sullivan S.A."/>
            <person name="Rosovitz M.J."/>
            <person name="Gwinn M.L."/>
            <person name="Zhou L."/>
            <person name="Schneider D.J."/>
            <person name="Cartinhour S.W."/>
            <person name="Nelson W.C."/>
            <person name="Weidman J."/>
            <person name="Watkins K."/>
            <person name="Tran K."/>
            <person name="Khouri H."/>
            <person name="Pierson E.A."/>
            <person name="Pierson L.S. III"/>
            <person name="Thomashow L.S."/>
            <person name="Loper J.E."/>
        </authorList>
    </citation>
    <scope>NUCLEOTIDE SEQUENCE [LARGE SCALE GENOMIC DNA]</scope>
    <source>
        <strain>ATCC BAA-477 / NRRL B-23932 / Pf-5</strain>
    </source>
</reference>
<dbReference type="EMBL" id="CP000076">
    <property type="protein sequence ID" value="AAY92366.2"/>
    <property type="molecule type" value="Genomic_DNA"/>
</dbReference>
<dbReference type="RefSeq" id="WP_011061383.1">
    <property type="nucleotide sequence ID" value="NC_004129.6"/>
</dbReference>
<dbReference type="SMR" id="Q4KC31"/>
<dbReference type="STRING" id="220664.PFL_3096"/>
<dbReference type="MEROPS" id="I11.001"/>
<dbReference type="KEGG" id="pfl:PFL_3096"/>
<dbReference type="PATRIC" id="fig|220664.5.peg.3157"/>
<dbReference type="eggNOG" id="COG4574">
    <property type="taxonomic scope" value="Bacteria"/>
</dbReference>
<dbReference type="HOGENOM" id="CLU_111565_0_0_6"/>
<dbReference type="Proteomes" id="UP000008540">
    <property type="component" value="Chromosome"/>
</dbReference>
<dbReference type="GO" id="GO:0042597">
    <property type="term" value="C:periplasmic space"/>
    <property type="evidence" value="ECO:0007669"/>
    <property type="project" value="UniProtKB-SubCell"/>
</dbReference>
<dbReference type="GO" id="GO:0004867">
    <property type="term" value="F:serine-type endopeptidase inhibitor activity"/>
    <property type="evidence" value="ECO:0007669"/>
    <property type="project" value="UniProtKB-UniRule"/>
</dbReference>
<dbReference type="Gene3D" id="2.60.40.550">
    <property type="entry name" value="Ecotin"/>
    <property type="match status" value="1"/>
</dbReference>
<dbReference type="Gene3D" id="4.10.1230.10">
    <property type="entry name" value="Ecotin, trypsin inhibitor"/>
    <property type="match status" value="1"/>
</dbReference>
<dbReference type="HAMAP" id="MF_00706">
    <property type="entry name" value="Ecotin"/>
    <property type="match status" value="1"/>
</dbReference>
<dbReference type="InterPro" id="IPR027438">
    <property type="entry name" value="Ecotin_C"/>
</dbReference>
<dbReference type="InterPro" id="IPR036198">
    <property type="entry name" value="Ecotin_sf"/>
</dbReference>
<dbReference type="InterPro" id="IPR005658">
    <property type="entry name" value="Prot_inh_ecotin"/>
</dbReference>
<dbReference type="InterPro" id="IPR023084">
    <property type="entry name" value="Prot_inh_ecotin_gammaproteobac"/>
</dbReference>
<dbReference type="NCBIfam" id="NF002987">
    <property type="entry name" value="PRK03719.1"/>
    <property type="match status" value="1"/>
</dbReference>
<dbReference type="PANTHER" id="PTHR35890">
    <property type="match status" value="1"/>
</dbReference>
<dbReference type="PANTHER" id="PTHR35890:SF3">
    <property type="entry name" value="ECOTIN"/>
    <property type="match status" value="1"/>
</dbReference>
<dbReference type="Pfam" id="PF03974">
    <property type="entry name" value="Ecotin"/>
    <property type="match status" value="1"/>
</dbReference>
<dbReference type="PIRSF" id="PIRSF006865">
    <property type="entry name" value="Prot_inh_ecotin"/>
    <property type="match status" value="1"/>
</dbReference>
<dbReference type="SUPFAM" id="SSF49772">
    <property type="entry name" value="Ecotin, trypsin inhibitor"/>
    <property type="match status" value="1"/>
</dbReference>
<evidence type="ECO:0000255" key="1">
    <source>
        <dbReference type="HAMAP-Rule" id="MF_00706"/>
    </source>
</evidence>
<proteinExistence type="inferred from homology"/>
<accession>Q4KC31</accession>
<sequence length="158" mass="17858">MRLLPLASVTLLSVLCAQAFAAKLEDTAPYPKAEDGFTRQVIHLPKQQHEDRYKVEILAGKTLTVDCNLQRLGGKLLEKNLEGWGYPYYRLDQVSGPISTRMACPDGKTREDFVPVTGDGFVLRYNSKLPIVIYAPKDVEVRYRLWSAADKTENARQE</sequence>
<feature type="signal peptide" evidence="1">
    <location>
        <begin position="1"/>
        <end position="21"/>
    </location>
</feature>
<feature type="chain" id="PRO_0000225648" description="Ecotin">
    <location>
        <begin position="22"/>
        <end position="158"/>
    </location>
</feature>
<feature type="site" description="Reactive bond" evidence="1">
    <location>
        <begin position="101"/>
        <end position="102"/>
    </location>
</feature>
<feature type="disulfide bond" evidence="1">
    <location>
        <begin position="67"/>
        <end position="104"/>
    </location>
</feature>
<comment type="function">
    <text evidence="1">General inhibitor of family S1 serine proteases.</text>
</comment>
<comment type="subunit">
    <text evidence="1">Homodimer.</text>
</comment>
<comment type="subcellular location">
    <subcellularLocation>
        <location evidence="1">Periplasm</location>
    </subcellularLocation>
</comment>
<comment type="similarity">
    <text evidence="1">Belongs to the protease inhibitor I11 (ecotin) family.</text>
</comment>
<keyword id="KW-1015">Disulfide bond</keyword>
<keyword id="KW-0574">Periplasm</keyword>
<keyword id="KW-0646">Protease inhibitor</keyword>
<keyword id="KW-0722">Serine protease inhibitor</keyword>
<keyword id="KW-0732">Signal</keyword>
<protein>
    <recommendedName>
        <fullName evidence="1">Ecotin</fullName>
    </recommendedName>
</protein>